<sequence>MSSGRIVQIIGAVIDVEFPRDSVPSIYNALEVKSAAGTTLEVQQQLGDGVVRTIAMGSTEGLKRGLEVTDSGAAISVPVGKATLGRIMDVLGNPIDEAGPIATEERWGIHRPAPSFAEQAGGNDLLETGIKVIDLVCPFAKGGKVGLFGGAGVGKTVNMMELIRNIAIEHSGYSVFAGVGERTREGNDFYHEMKDSNVLDKVALVYGQMNEPPGNRLRVALTGLTMAEKFRDEGNDVLLFVDNIYRYTLAGTEVSALLGRMPSAVGYQPTLAEEMGTLQERITSTKNGSITSIQAVYVPADDLTDPSPATTFAHLDATVVLSRDIASLGIYPAVDPLDSTSRQLDPNVIGQEHYDTARGVQYVLQRYKELKDIIAILGMDELSETDKQLVNRARKIQRFLSQPFFVAEVFTGASGKYVSLKDTIAGFKGILNGDYDHLPEQAFYMVGGIEEAIEKAKKL</sequence>
<evidence type="ECO:0000255" key="1">
    <source>
        <dbReference type="HAMAP-Rule" id="MF_01347"/>
    </source>
</evidence>
<proteinExistence type="inferred from homology"/>
<comment type="function">
    <text evidence="1">Produces ATP from ADP in the presence of a proton gradient across the membrane. The catalytic sites are hosted primarily by the beta subunits.</text>
</comment>
<comment type="catalytic activity">
    <reaction evidence="1">
        <text>ATP + H2O + 4 H(+)(in) = ADP + phosphate + 5 H(+)(out)</text>
        <dbReference type="Rhea" id="RHEA:57720"/>
        <dbReference type="ChEBI" id="CHEBI:15377"/>
        <dbReference type="ChEBI" id="CHEBI:15378"/>
        <dbReference type="ChEBI" id="CHEBI:30616"/>
        <dbReference type="ChEBI" id="CHEBI:43474"/>
        <dbReference type="ChEBI" id="CHEBI:456216"/>
        <dbReference type="EC" id="7.1.2.2"/>
    </reaction>
</comment>
<comment type="subunit">
    <text evidence="1">F-type ATPases have 2 components, CF(1) - the catalytic core - and CF(0) - the membrane proton channel. CF(1) has five subunits: alpha(3), beta(3), gamma(1), delta(1), epsilon(1). CF(0) has three main subunits: a(1), b(2) and c(9-12). The alpha and beta chains form an alternating ring which encloses part of the gamma chain. CF(1) is attached to CF(0) by a central stalk formed by the gamma and epsilon chains, while a peripheral stalk is formed by the delta and b chains.</text>
</comment>
<comment type="subcellular location">
    <subcellularLocation>
        <location evidence="1">Cell inner membrane</location>
        <topology evidence="1">Peripheral membrane protein</topology>
    </subcellularLocation>
</comment>
<comment type="similarity">
    <text evidence="1">Belongs to the ATPase alpha/beta chains family.</text>
</comment>
<dbReference type="EC" id="7.1.2.2" evidence="1"/>
<dbReference type="EMBL" id="AE016853">
    <property type="protein sequence ID" value="AAO59012.1"/>
    <property type="molecule type" value="Genomic_DNA"/>
</dbReference>
<dbReference type="RefSeq" id="NP_795317.1">
    <property type="nucleotide sequence ID" value="NC_004578.1"/>
</dbReference>
<dbReference type="RefSeq" id="WP_003377898.1">
    <property type="nucleotide sequence ID" value="NC_004578.1"/>
</dbReference>
<dbReference type="SMR" id="Q87TT4"/>
<dbReference type="STRING" id="223283.PSPTO_5599"/>
<dbReference type="GeneID" id="61789455"/>
<dbReference type="KEGG" id="pst:PSPTO_5599"/>
<dbReference type="PATRIC" id="fig|223283.9.peg.5736"/>
<dbReference type="eggNOG" id="COG0055">
    <property type="taxonomic scope" value="Bacteria"/>
</dbReference>
<dbReference type="HOGENOM" id="CLU_022398_0_2_6"/>
<dbReference type="OrthoDB" id="9801639at2"/>
<dbReference type="PhylomeDB" id="Q87TT4"/>
<dbReference type="Proteomes" id="UP000002515">
    <property type="component" value="Chromosome"/>
</dbReference>
<dbReference type="GO" id="GO:0005886">
    <property type="term" value="C:plasma membrane"/>
    <property type="evidence" value="ECO:0007669"/>
    <property type="project" value="UniProtKB-SubCell"/>
</dbReference>
<dbReference type="GO" id="GO:0045259">
    <property type="term" value="C:proton-transporting ATP synthase complex"/>
    <property type="evidence" value="ECO:0007669"/>
    <property type="project" value="UniProtKB-KW"/>
</dbReference>
<dbReference type="GO" id="GO:0005524">
    <property type="term" value="F:ATP binding"/>
    <property type="evidence" value="ECO:0007669"/>
    <property type="project" value="UniProtKB-UniRule"/>
</dbReference>
<dbReference type="GO" id="GO:0016887">
    <property type="term" value="F:ATP hydrolysis activity"/>
    <property type="evidence" value="ECO:0007669"/>
    <property type="project" value="InterPro"/>
</dbReference>
<dbReference type="GO" id="GO:0046933">
    <property type="term" value="F:proton-transporting ATP synthase activity, rotational mechanism"/>
    <property type="evidence" value="ECO:0007669"/>
    <property type="project" value="UniProtKB-UniRule"/>
</dbReference>
<dbReference type="CDD" id="cd18110">
    <property type="entry name" value="ATP-synt_F1_beta_C"/>
    <property type="match status" value="1"/>
</dbReference>
<dbReference type="CDD" id="cd18115">
    <property type="entry name" value="ATP-synt_F1_beta_N"/>
    <property type="match status" value="1"/>
</dbReference>
<dbReference type="CDD" id="cd01133">
    <property type="entry name" value="F1-ATPase_beta_CD"/>
    <property type="match status" value="1"/>
</dbReference>
<dbReference type="FunFam" id="1.10.1140.10:FF:000001">
    <property type="entry name" value="ATP synthase subunit beta"/>
    <property type="match status" value="1"/>
</dbReference>
<dbReference type="FunFam" id="2.40.10.170:FF:000005">
    <property type="entry name" value="ATP synthase subunit beta"/>
    <property type="match status" value="1"/>
</dbReference>
<dbReference type="FunFam" id="3.40.50.300:FF:000004">
    <property type="entry name" value="ATP synthase subunit beta"/>
    <property type="match status" value="1"/>
</dbReference>
<dbReference type="Gene3D" id="2.40.10.170">
    <property type="match status" value="1"/>
</dbReference>
<dbReference type="Gene3D" id="1.10.1140.10">
    <property type="entry name" value="Bovine Mitochondrial F1-atpase, Atp Synthase Beta Chain, Chain D, domain 3"/>
    <property type="match status" value="1"/>
</dbReference>
<dbReference type="Gene3D" id="3.40.50.300">
    <property type="entry name" value="P-loop containing nucleotide triphosphate hydrolases"/>
    <property type="match status" value="1"/>
</dbReference>
<dbReference type="HAMAP" id="MF_01347">
    <property type="entry name" value="ATP_synth_beta_bact"/>
    <property type="match status" value="1"/>
</dbReference>
<dbReference type="InterPro" id="IPR003593">
    <property type="entry name" value="AAA+_ATPase"/>
</dbReference>
<dbReference type="InterPro" id="IPR055190">
    <property type="entry name" value="ATP-synt_VA_C"/>
</dbReference>
<dbReference type="InterPro" id="IPR005722">
    <property type="entry name" value="ATP_synth_F1_bsu"/>
</dbReference>
<dbReference type="InterPro" id="IPR020003">
    <property type="entry name" value="ATPase_a/bsu_AS"/>
</dbReference>
<dbReference type="InterPro" id="IPR050053">
    <property type="entry name" value="ATPase_alpha/beta_chains"/>
</dbReference>
<dbReference type="InterPro" id="IPR004100">
    <property type="entry name" value="ATPase_F1/V1/A1_a/bsu_N"/>
</dbReference>
<dbReference type="InterPro" id="IPR036121">
    <property type="entry name" value="ATPase_F1/V1/A1_a/bsu_N_sf"/>
</dbReference>
<dbReference type="InterPro" id="IPR000194">
    <property type="entry name" value="ATPase_F1/V1/A1_a/bsu_nucl-bd"/>
</dbReference>
<dbReference type="InterPro" id="IPR024034">
    <property type="entry name" value="ATPase_F1/V1_b/a_C"/>
</dbReference>
<dbReference type="InterPro" id="IPR027417">
    <property type="entry name" value="P-loop_NTPase"/>
</dbReference>
<dbReference type="NCBIfam" id="TIGR01039">
    <property type="entry name" value="atpD"/>
    <property type="match status" value="1"/>
</dbReference>
<dbReference type="PANTHER" id="PTHR15184">
    <property type="entry name" value="ATP SYNTHASE"/>
    <property type="match status" value="1"/>
</dbReference>
<dbReference type="PANTHER" id="PTHR15184:SF71">
    <property type="entry name" value="ATP SYNTHASE SUBUNIT BETA, MITOCHONDRIAL"/>
    <property type="match status" value="1"/>
</dbReference>
<dbReference type="Pfam" id="PF00006">
    <property type="entry name" value="ATP-synt_ab"/>
    <property type="match status" value="1"/>
</dbReference>
<dbReference type="Pfam" id="PF02874">
    <property type="entry name" value="ATP-synt_ab_N"/>
    <property type="match status" value="1"/>
</dbReference>
<dbReference type="Pfam" id="PF22919">
    <property type="entry name" value="ATP-synt_VA_C"/>
    <property type="match status" value="1"/>
</dbReference>
<dbReference type="SMART" id="SM00382">
    <property type="entry name" value="AAA"/>
    <property type="match status" value="1"/>
</dbReference>
<dbReference type="SUPFAM" id="SSF47917">
    <property type="entry name" value="C-terminal domain of alpha and beta subunits of F1 ATP synthase"/>
    <property type="match status" value="1"/>
</dbReference>
<dbReference type="SUPFAM" id="SSF50615">
    <property type="entry name" value="N-terminal domain of alpha and beta subunits of F1 ATP synthase"/>
    <property type="match status" value="1"/>
</dbReference>
<dbReference type="SUPFAM" id="SSF52540">
    <property type="entry name" value="P-loop containing nucleoside triphosphate hydrolases"/>
    <property type="match status" value="1"/>
</dbReference>
<dbReference type="PROSITE" id="PS00152">
    <property type="entry name" value="ATPASE_ALPHA_BETA"/>
    <property type="match status" value="1"/>
</dbReference>
<feature type="chain" id="PRO_0000254344" description="ATP synthase subunit beta">
    <location>
        <begin position="1"/>
        <end position="459"/>
    </location>
</feature>
<feature type="binding site" evidence="1">
    <location>
        <begin position="149"/>
        <end position="156"/>
    </location>
    <ligand>
        <name>ATP</name>
        <dbReference type="ChEBI" id="CHEBI:30616"/>
    </ligand>
</feature>
<name>ATPB_PSESM</name>
<keyword id="KW-0066">ATP synthesis</keyword>
<keyword id="KW-0067">ATP-binding</keyword>
<keyword id="KW-0997">Cell inner membrane</keyword>
<keyword id="KW-1003">Cell membrane</keyword>
<keyword id="KW-0139">CF(1)</keyword>
<keyword id="KW-0375">Hydrogen ion transport</keyword>
<keyword id="KW-0406">Ion transport</keyword>
<keyword id="KW-0472">Membrane</keyword>
<keyword id="KW-0547">Nucleotide-binding</keyword>
<keyword id="KW-1185">Reference proteome</keyword>
<keyword id="KW-1278">Translocase</keyword>
<keyword id="KW-0813">Transport</keyword>
<gene>
    <name evidence="1" type="primary">atpD</name>
    <name type="ordered locus">PSPTO_5599</name>
</gene>
<accession>Q87TT4</accession>
<organism>
    <name type="scientific">Pseudomonas syringae pv. tomato (strain ATCC BAA-871 / DC3000)</name>
    <dbReference type="NCBI Taxonomy" id="223283"/>
    <lineage>
        <taxon>Bacteria</taxon>
        <taxon>Pseudomonadati</taxon>
        <taxon>Pseudomonadota</taxon>
        <taxon>Gammaproteobacteria</taxon>
        <taxon>Pseudomonadales</taxon>
        <taxon>Pseudomonadaceae</taxon>
        <taxon>Pseudomonas</taxon>
    </lineage>
</organism>
<reference key="1">
    <citation type="journal article" date="2003" name="Proc. Natl. Acad. Sci. U.S.A.">
        <title>The complete genome sequence of the Arabidopsis and tomato pathogen Pseudomonas syringae pv. tomato DC3000.</title>
        <authorList>
            <person name="Buell C.R."/>
            <person name="Joardar V."/>
            <person name="Lindeberg M."/>
            <person name="Selengut J."/>
            <person name="Paulsen I.T."/>
            <person name="Gwinn M.L."/>
            <person name="Dodson R.J."/>
            <person name="DeBoy R.T."/>
            <person name="Durkin A.S."/>
            <person name="Kolonay J.F."/>
            <person name="Madupu R."/>
            <person name="Daugherty S.C."/>
            <person name="Brinkac L.M."/>
            <person name="Beanan M.J."/>
            <person name="Haft D.H."/>
            <person name="Nelson W.C."/>
            <person name="Davidsen T.M."/>
            <person name="Zafar N."/>
            <person name="Zhou L."/>
            <person name="Liu J."/>
            <person name="Yuan Q."/>
            <person name="Khouri H.M."/>
            <person name="Fedorova N.B."/>
            <person name="Tran B."/>
            <person name="Russell D."/>
            <person name="Berry K.J."/>
            <person name="Utterback T.R."/>
            <person name="Van Aken S.E."/>
            <person name="Feldblyum T.V."/>
            <person name="D'Ascenzo M."/>
            <person name="Deng W.-L."/>
            <person name="Ramos A.R."/>
            <person name="Alfano J.R."/>
            <person name="Cartinhour S."/>
            <person name="Chatterjee A.K."/>
            <person name="Delaney T.P."/>
            <person name="Lazarowitz S.G."/>
            <person name="Martin G.B."/>
            <person name="Schneider D.J."/>
            <person name="Tang X."/>
            <person name="Bender C.L."/>
            <person name="White O."/>
            <person name="Fraser C.M."/>
            <person name="Collmer A."/>
        </authorList>
    </citation>
    <scope>NUCLEOTIDE SEQUENCE [LARGE SCALE GENOMIC DNA]</scope>
    <source>
        <strain>ATCC BAA-871 / DC3000</strain>
    </source>
</reference>
<protein>
    <recommendedName>
        <fullName evidence="1">ATP synthase subunit beta</fullName>
        <ecNumber evidence="1">7.1.2.2</ecNumber>
    </recommendedName>
    <alternativeName>
        <fullName evidence="1">ATP synthase F1 sector subunit beta</fullName>
    </alternativeName>
    <alternativeName>
        <fullName evidence="1">F-ATPase subunit beta</fullName>
    </alternativeName>
</protein>